<dbReference type="EC" id="7.1.1.-" evidence="1"/>
<dbReference type="EMBL" id="AM260522">
    <property type="protein sequence ID" value="CAJ99064.1"/>
    <property type="molecule type" value="Genomic_DNA"/>
</dbReference>
<dbReference type="RefSeq" id="WP_011577180.1">
    <property type="nucleotide sequence ID" value="NC_008229.1"/>
</dbReference>
<dbReference type="SMR" id="Q17Z62"/>
<dbReference type="STRING" id="382638.Hac_0214"/>
<dbReference type="GeneID" id="31757737"/>
<dbReference type="KEGG" id="hac:Hac_0214"/>
<dbReference type="eggNOG" id="COG0713">
    <property type="taxonomic scope" value="Bacteria"/>
</dbReference>
<dbReference type="HOGENOM" id="CLU_144724_0_0_7"/>
<dbReference type="OrthoDB" id="9810120at2"/>
<dbReference type="BioCyc" id="HACI382638:HAC_RS00955-MONOMER"/>
<dbReference type="Proteomes" id="UP000000775">
    <property type="component" value="Chromosome"/>
</dbReference>
<dbReference type="GO" id="GO:0030964">
    <property type="term" value="C:NADH dehydrogenase complex"/>
    <property type="evidence" value="ECO:0007669"/>
    <property type="project" value="TreeGrafter"/>
</dbReference>
<dbReference type="GO" id="GO:0005886">
    <property type="term" value="C:plasma membrane"/>
    <property type="evidence" value="ECO:0007669"/>
    <property type="project" value="UniProtKB-SubCell"/>
</dbReference>
<dbReference type="GO" id="GO:0050136">
    <property type="term" value="F:NADH:ubiquinone reductase (non-electrogenic) activity"/>
    <property type="evidence" value="ECO:0007669"/>
    <property type="project" value="UniProtKB-UniRule"/>
</dbReference>
<dbReference type="GO" id="GO:0048038">
    <property type="term" value="F:quinone binding"/>
    <property type="evidence" value="ECO:0007669"/>
    <property type="project" value="UniProtKB-KW"/>
</dbReference>
<dbReference type="GO" id="GO:0042773">
    <property type="term" value="P:ATP synthesis coupled electron transport"/>
    <property type="evidence" value="ECO:0007669"/>
    <property type="project" value="InterPro"/>
</dbReference>
<dbReference type="FunFam" id="1.10.287.3510:FF:000001">
    <property type="entry name" value="NADH-quinone oxidoreductase subunit K"/>
    <property type="match status" value="1"/>
</dbReference>
<dbReference type="Gene3D" id="1.10.287.3510">
    <property type="match status" value="1"/>
</dbReference>
<dbReference type="HAMAP" id="MF_01456">
    <property type="entry name" value="NDH1_NuoK"/>
    <property type="match status" value="1"/>
</dbReference>
<dbReference type="InterPro" id="IPR001133">
    <property type="entry name" value="NADH_UbQ_OxRdtase_chain4L/K"/>
</dbReference>
<dbReference type="InterPro" id="IPR039428">
    <property type="entry name" value="NUOK/Mnh_C1-like"/>
</dbReference>
<dbReference type="NCBIfam" id="NF004320">
    <property type="entry name" value="PRK05715.1-2"/>
    <property type="match status" value="1"/>
</dbReference>
<dbReference type="NCBIfam" id="NF004321">
    <property type="entry name" value="PRK05715.1-3"/>
    <property type="match status" value="1"/>
</dbReference>
<dbReference type="NCBIfam" id="NF004323">
    <property type="entry name" value="PRK05715.1-5"/>
    <property type="match status" value="1"/>
</dbReference>
<dbReference type="PANTHER" id="PTHR11434:SF21">
    <property type="entry name" value="NADH DEHYDROGENASE SUBUNIT 4L-RELATED"/>
    <property type="match status" value="1"/>
</dbReference>
<dbReference type="PANTHER" id="PTHR11434">
    <property type="entry name" value="NADH-UBIQUINONE OXIDOREDUCTASE SUBUNIT ND4L"/>
    <property type="match status" value="1"/>
</dbReference>
<dbReference type="Pfam" id="PF00420">
    <property type="entry name" value="Oxidored_q2"/>
    <property type="match status" value="1"/>
</dbReference>
<proteinExistence type="inferred from homology"/>
<comment type="function">
    <text evidence="1">NDH-1 shuttles electrons from NADH, via FMN and iron-sulfur (Fe-S) centers, to quinones in the respiratory chain. The immediate electron acceptor for the enzyme in this species is believed to be ubiquinone. Couples the redox reaction to proton translocation (for every two electrons transferred, four hydrogen ions are translocated across the cytoplasmic membrane), and thus conserves the redox energy in a proton gradient.</text>
</comment>
<comment type="catalytic activity">
    <reaction evidence="1">
        <text>a quinone + NADH + 5 H(+)(in) = a quinol + NAD(+) + 4 H(+)(out)</text>
        <dbReference type="Rhea" id="RHEA:57888"/>
        <dbReference type="ChEBI" id="CHEBI:15378"/>
        <dbReference type="ChEBI" id="CHEBI:24646"/>
        <dbReference type="ChEBI" id="CHEBI:57540"/>
        <dbReference type="ChEBI" id="CHEBI:57945"/>
        <dbReference type="ChEBI" id="CHEBI:132124"/>
    </reaction>
</comment>
<comment type="subunit">
    <text evidence="1">NDH-1 is composed of 14 different subunits. Subunits NuoA, H, J, K, L, M, N constitute the membrane sector of the complex.</text>
</comment>
<comment type="subcellular location">
    <subcellularLocation>
        <location evidence="1">Cell inner membrane</location>
        <topology evidence="1">Multi-pass membrane protein</topology>
    </subcellularLocation>
</comment>
<comment type="similarity">
    <text evidence="1">Belongs to the complex I subunit 4L family.</text>
</comment>
<feature type="chain" id="PRO_0000390089" description="NADH-quinone oxidoreductase subunit K">
    <location>
        <begin position="1"/>
        <end position="100"/>
    </location>
</feature>
<feature type="transmembrane region" description="Helical" evidence="1">
    <location>
        <begin position="1"/>
        <end position="21"/>
    </location>
</feature>
<feature type="transmembrane region" description="Helical" evidence="1">
    <location>
        <begin position="28"/>
        <end position="48"/>
    </location>
</feature>
<feature type="transmembrane region" description="Helical" evidence="1">
    <location>
        <begin position="64"/>
        <end position="84"/>
    </location>
</feature>
<sequence length="100" mass="11019">MIGLNHYLIVSGLLFCIGLAGMLKRKNILLLFFSTEIMLNAINIGFIAISKYIHNLDGQMFALFIIAIAASEVAIGLGLVILWFKKFKSLDIDSLNAMKG</sequence>
<protein>
    <recommendedName>
        <fullName evidence="1">NADH-quinone oxidoreductase subunit K</fullName>
        <ecNumber evidence="1">7.1.1.-</ecNumber>
    </recommendedName>
    <alternativeName>
        <fullName evidence="1">NADH dehydrogenase I subunit K</fullName>
    </alternativeName>
    <alternativeName>
        <fullName evidence="1">NDH-1 subunit K</fullName>
    </alternativeName>
</protein>
<keyword id="KW-0997">Cell inner membrane</keyword>
<keyword id="KW-1003">Cell membrane</keyword>
<keyword id="KW-0472">Membrane</keyword>
<keyword id="KW-0520">NAD</keyword>
<keyword id="KW-0874">Quinone</keyword>
<keyword id="KW-1278">Translocase</keyword>
<keyword id="KW-0812">Transmembrane</keyword>
<keyword id="KW-1133">Transmembrane helix</keyword>
<keyword id="KW-0813">Transport</keyword>
<keyword id="KW-0830">Ubiquinone</keyword>
<evidence type="ECO:0000255" key="1">
    <source>
        <dbReference type="HAMAP-Rule" id="MF_01456"/>
    </source>
</evidence>
<name>NUOK_HELAH</name>
<gene>
    <name evidence="1" type="primary">nuoK</name>
    <name type="ordered locus">Hac_0214</name>
</gene>
<organism>
    <name type="scientific">Helicobacter acinonychis (strain Sheeba)</name>
    <dbReference type="NCBI Taxonomy" id="382638"/>
    <lineage>
        <taxon>Bacteria</taxon>
        <taxon>Pseudomonadati</taxon>
        <taxon>Campylobacterota</taxon>
        <taxon>Epsilonproteobacteria</taxon>
        <taxon>Campylobacterales</taxon>
        <taxon>Helicobacteraceae</taxon>
        <taxon>Helicobacter</taxon>
    </lineage>
</organism>
<reference key="1">
    <citation type="journal article" date="2006" name="PLoS Genet.">
        <title>Who ate whom? Adaptive Helicobacter genomic changes that accompanied a host jump from early humans to large felines.</title>
        <authorList>
            <person name="Eppinger M."/>
            <person name="Baar C."/>
            <person name="Linz B."/>
            <person name="Raddatz G."/>
            <person name="Lanz C."/>
            <person name="Keller H."/>
            <person name="Morelli G."/>
            <person name="Gressmann H."/>
            <person name="Achtman M."/>
            <person name="Schuster S.C."/>
        </authorList>
    </citation>
    <scope>NUCLEOTIDE SEQUENCE [LARGE SCALE GENOMIC DNA]</scope>
    <source>
        <strain>Sheeba</strain>
    </source>
</reference>
<accession>Q17Z62</accession>